<accession>O35507</accession>
<protein>
    <recommendedName>
        <fullName>Peroxisome proliferator-activated receptor alpha</fullName>
        <shortName>PPAR-alpha</shortName>
    </recommendedName>
    <alternativeName>
        <fullName>Nuclear receptor subfamily 1 group C member 1</fullName>
    </alternativeName>
</protein>
<name>PPARA_CAVPO</name>
<comment type="function">
    <text evidence="1">Ligand-activated transcription factor. Key regulator of lipid metabolism. Activated by the endogenous ligand 1-palmitoyl-2-oleoyl-sn-glycerol-3-phosphocholine (16:0/18:1-GPC). Activated by oleylethanolamide, a naturally occurring lipid that regulates satiety. Receptor for peroxisome proliferators such as hypolipidemic drugs and fatty acids. Regulates the peroxisomal beta-oxidation pathway of fatty acids. Functions as a transcription activator for the ACOX1 and P450 genes. Transactivation activity requires heterodimerization with RXRA and is antagonized by NR2C2. May be required for the propagation of clock information to metabolic pathways regulated by PER2 (By similarity).</text>
</comment>
<comment type="subunit">
    <text evidence="2 3 4">Heterodimer; with RXRA. This heterodimerization is required for DNA binding and transactivation activity. Interacts with NCOA3 coactivator. Interacts with CITED2; the interaction stimulates its transcriptional activity. Also interacts with PPARBP in vitro. Interacts with AKAP13, LPIN1, PRDM16 and coactivator NCOA6. Interacts with ASXL1 and ASXL2. Interacts with PER2. Interacts with SIRT1; the interaction seems to be modulated by NAD(+) levels (By similarity). Interacts with CRY1 and CRY2 (By similarity). In hepatocytes, interacts with PAQR3 and HUWE1; the interactions promote PPARA poylubiquitination and HUWE1-mediated degradation (By similarity).</text>
</comment>
<comment type="subcellular location">
    <subcellularLocation>
        <location>Nucleus</location>
    </subcellularLocation>
</comment>
<comment type="PTM">
    <text evidence="2">Ubiquitinated by E3 ubiquitin-protein ligase HUWE1; leading to proteasomal degradation.</text>
</comment>
<comment type="PTM">
    <text evidence="3">Phosphorylated.</text>
</comment>
<comment type="similarity">
    <text evidence="7">Belongs to the nuclear hormone receptor family. NR1 subfamily.</text>
</comment>
<feature type="chain" id="PRO_0000053480" description="Peroxisome proliferator-activated receptor alpha">
    <location>
        <begin position="1"/>
        <end position="467"/>
    </location>
</feature>
<feature type="domain" description="NR LBD" evidence="6">
    <location>
        <begin position="239"/>
        <end position="466"/>
    </location>
</feature>
<feature type="DNA-binding region" description="Nuclear receptor" evidence="5">
    <location>
        <begin position="99"/>
        <end position="173"/>
    </location>
</feature>
<feature type="zinc finger region" description="NR C4-type" evidence="5">
    <location>
        <begin position="102"/>
        <end position="122"/>
    </location>
</feature>
<feature type="zinc finger region" description="NR C4-type" evidence="5">
    <location>
        <begin position="139"/>
        <end position="161"/>
    </location>
</feature>
<feature type="region of interest" description="Required for heterodimerization with RXRA" evidence="1">
    <location>
        <begin position="304"/>
        <end position="433"/>
    </location>
</feature>
<feature type="site" description="Essential for heterodimerization with RXRA" evidence="1">
    <location>
        <position position="433"/>
    </location>
</feature>
<keyword id="KW-0010">Activator</keyword>
<keyword id="KW-0090">Biological rhythms</keyword>
<keyword id="KW-0238">DNA-binding</keyword>
<keyword id="KW-0446">Lipid-binding</keyword>
<keyword id="KW-0479">Metal-binding</keyword>
<keyword id="KW-0539">Nucleus</keyword>
<keyword id="KW-0675">Receptor</keyword>
<keyword id="KW-1185">Reference proteome</keyword>
<keyword id="KW-0804">Transcription</keyword>
<keyword id="KW-0805">Transcription regulation</keyword>
<keyword id="KW-0832">Ubl conjugation</keyword>
<keyword id="KW-0862">Zinc</keyword>
<keyword id="KW-0863">Zinc-finger</keyword>
<sequence length="467" mass="52313">MVDMESPLCPLSPLEAEDLESPLSEYFLQEMGTIQDISRSLGEDSSGSFGFPEYQYLGSGPGSDGSVITDTLSPASSPSSVSYPEVPCGVDEPPSSALNIECRICGDKASGYHYGVHACEGCKGFFRRTIRLKLVYDKCDRSCKIQKKNRNKCQYCRFHKCLSVGMSHNAIRFGRMPRSEKAKLKAEVLTCDRDSEGAETADLKSLAKRIYEAYLKNFHMNKVKARIILAGKTSSHPLFVIHDMETLCTAEKTLMAKVVSDGIRDKEAEVRIFHCCQCVSVETVTNLTEFAKAIPGFASLDLNDQVTLLKYGVYEAIFTMLSSTMNKDGMLVAYGHGFITREFLKNLRKPFCDMMEPKFNFAMKFNALELDDSDISLFVAAIICCGDRPGLLNIDHIEKMQEAIVHVLKLHLQSNHPDDTFLFPKLLQKLADLRQLVTEHAQLVQVIKTESDAALHPLLQEIYRDMY</sequence>
<organism>
    <name type="scientific">Cavia porcellus</name>
    <name type="common">Guinea pig</name>
    <dbReference type="NCBI Taxonomy" id="10141"/>
    <lineage>
        <taxon>Eukaryota</taxon>
        <taxon>Metazoa</taxon>
        <taxon>Chordata</taxon>
        <taxon>Craniata</taxon>
        <taxon>Vertebrata</taxon>
        <taxon>Euteleostomi</taxon>
        <taxon>Mammalia</taxon>
        <taxon>Eutheria</taxon>
        <taxon>Euarchontoglires</taxon>
        <taxon>Glires</taxon>
        <taxon>Rodentia</taxon>
        <taxon>Hystricomorpha</taxon>
        <taxon>Caviidae</taxon>
        <taxon>Cavia</taxon>
    </lineage>
</organism>
<proteinExistence type="evidence at transcript level"/>
<dbReference type="EMBL" id="AJ000222">
    <property type="protein sequence ID" value="CAA03951.1"/>
    <property type="molecule type" value="mRNA"/>
</dbReference>
<dbReference type="RefSeq" id="NP_001166475.1">
    <property type="nucleotide sequence ID" value="NM_001173004.1"/>
</dbReference>
<dbReference type="SMR" id="O35507"/>
<dbReference type="FunCoup" id="O35507">
    <property type="interactions" value="2028"/>
</dbReference>
<dbReference type="STRING" id="10141.ENSCPOP00000001339"/>
<dbReference type="Ensembl" id="ENSCPOT00000001502.3">
    <property type="protein sequence ID" value="ENSCPOP00000001339.2"/>
    <property type="gene ID" value="ENSCPOG00000001483.4"/>
</dbReference>
<dbReference type="GeneID" id="100135604"/>
<dbReference type="KEGG" id="cpoc:100135604"/>
<dbReference type="CTD" id="5465"/>
<dbReference type="VEuPathDB" id="HostDB:ENSCPOG00000001483"/>
<dbReference type="eggNOG" id="KOG3575">
    <property type="taxonomic scope" value="Eukaryota"/>
</dbReference>
<dbReference type="GeneTree" id="ENSGT00940000157097"/>
<dbReference type="HOGENOM" id="CLU_007368_4_1_1"/>
<dbReference type="InParanoid" id="O35507"/>
<dbReference type="OMA" id="TNHPDNI"/>
<dbReference type="OrthoDB" id="7634782at2759"/>
<dbReference type="TreeFam" id="TF316304"/>
<dbReference type="Proteomes" id="UP000005447">
    <property type="component" value="Unassembled WGS sequence"/>
</dbReference>
<dbReference type="Bgee" id="ENSCPOG00000001483">
    <property type="expression patterns" value="Expressed in heart left ventricle and 12 other cell types or tissues"/>
</dbReference>
<dbReference type="GO" id="GO:0005634">
    <property type="term" value="C:nucleus"/>
    <property type="evidence" value="ECO:0007669"/>
    <property type="project" value="UniProtKB-SubCell"/>
</dbReference>
<dbReference type="GO" id="GO:0001228">
    <property type="term" value="F:DNA-binding transcription activator activity, RNA polymerase II-specific"/>
    <property type="evidence" value="ECO:0007669"/>
    <property type="project" value="Ensembl"/>
</dbReference>
<dbReference type="GO" id="GO:0001227">
    <property type="term" value="F:DNA-binding transcription repressor activity, RNA polymerase II-specific"/>
    <property type="evidence" value="ECO:0007669"/>
    <property type="project" value="Ensembl"/>
</dbReference>
<dbReference type="GO" id="GO:0008289">
    <property type="term" value="F:lipid binding"/>
    <property type="evidence" value="ECO:0000250"/>
    <property type="project" value="UniProtKB"/>
</dbReference>
<dbReference type="GO" id="GO:0004879">
    <property type="term" value="F:nuclear receptor activity"/>
    <property type="evidence" value="ECO:0000250"/>
    <property type="project" value="UniProtKB"/>
</dbReference>
<dbReference type="GO" id="GO:0003707">
    <property type="term" value="F:nuclear steroid receptor activity"/>
    <property type="evidence" value="ECO:0007669"/>
    <property type="project" value="Ensembl"/>
</dbReference>
<dbReference type="GO" id="GO:0000978">
    <property type="term" value="F:RNA polymerase II cis-regulatory region sequence-specific DNA binding"/>
    <property type="evidence" value="ECO:0007669"/>
    <property type="project" value="Ensembl"/>
</dbReference>
<dbReference type="GO" id="GO:0061629">
    <property type="term" value="F:RNA polymerase II-specific DNA-binding transcription factor binding"/>
    <property type="evidence" value="ECO:0007669"/>
    <property type="project" value="Ensembl"/>
</dbReference>
<dbReference type="GO" id="GO:0031624">
    <property type="term" value="F:ubiquitin conjugating enzyme binding"/>
    <property type="evidence" value="ECO:0007669"/>
    <property type="project" value="Ensembl"/>
</dbReference>
<dbReference type="GO" id="GO:0008270">
    <property type="term" value="F:zinc ion binding"/>
    <property type="evidence" value="ECO:0007669"/>
    <property type="project" value="UniProtKB-KW"/>
</dbReference>
<dbReference type="GO" id="GO:0030154">
    <property type="term" value="P:cell differentiation"/>
    <property type="evidence" value="ECO:0007669"/>
    <property type="project" value="TreeGrafter"/>
</dbReference>
<dbReference type="GO" id="GO:0009267">
    <property type="term" value="P:cellular response to starvation"/>
    <property type="evidence" value="ECO:0007669"/>
    <property type="project" value="Ensembl"/>
</dbReference>
<dbReference type="GO" id="GO:0032922">
    <property type="term" value="P:circadian regulation of gene expression"/>
    <property type="evidence" value="ECO:0000250"/>
    <property type="project" value="UniProtKB"/>
</dbReference>
<dbReference type="GO" id="GO:0070166">
    <property type="term" value="P:enamel mineralization"/>
    <property type="evidence" value="ECO:0007669"/>
    <property type="project" value="Ensembl"/>
</dbReference>
<dbReference type="GO" id="GO:0008544">
    <property type="term" value="P:epidermis development"/>
    <property type="evidence" value="ECO:0007669"/>
    <property type="project" value="Ensembl"/>
</dbReference>
<dbReference type="GO" id="GO:0006631">
    <property type="term" value="P:fatty acid metabolic process"/>
    <property type="evidence" value="ECO:0007669"/>
    <property type="project" value="Ensembl"/>
</dbReference>
<dbReference type="GO" id="GO:0010467">
    <property type="term" value="P:gene expression"/>
    <property type="evidence" value="ECO:0007669"/>
    <property type="project" value="Ensembl"/>
</dbReference>
<dbReference type="GO" id="GO:0006094">
    <property type="term" value="P:gluconeogenesis"/>
    <property type="evidence" value="ECO:0007669"/>
    <property type="project" value="Ensembl"/>
</dbReference>
<dbReference type="GO" id="GO:0032099">
    <property type="term" value="P:negative regulation of appetite"/>
    <property type="evidence" value="ECO:0000250"/>
    <property type="project" value="UniProtKB"/>
</dbReference>
<dbReference type="GO" id="GO:0010887">
    <property type="term" value="P:negative regulation of cholesterol storage"/>
    <property type="evidence" value="ECO:0007669"/>
    <property type="project" value="Ensembl"/>
</dbReference>
<dbReference type="GO" id="GO:1900016">
    <property type="term" value="P:negative regulation of cytokine production involved in inflammatory response"/>
    <property type="evidence" value="ECO:0007669"/>
    <property type="project" value="Ensembl"/>
</dbReference>
<dbReference type="GO" id="GO:0045820">
    <property type="term" value="P:negative regulation of glycolytic process"/>
    <property type="evidence" value="ECO:0007669"/>
    <property type="project" value="Ensembl"/>
</dbReference>
<dbReference type="GO" id="GO:1903944">
    <property type="term" value="P:negative regulation of hepatocyte apoptotic process"/>
    <property type="evidence" value="ECO:0007669"/>
    <property type="project" value="Ensembl"/>
</dbReference>
<dbReference type="GO" id="GO:0050728">
    <property type="term" value="P:negative regulation of inflammatory response"/>
    <property type="evidence" value="ECO:0007669"/>
    <property type="project" value="Ensembl"/>
</dbReference>
<dbReference type="GO" id="GO:1903038">
    <property type="term" value="P:negative regulation of leukocyte cell-cell adhesion"/>
    <property type="evidence" value="ECO:0007669"/>
    <property type="project" value="Ensembl"/>
</dbReference>
<dbReference type="GO" id="GO:0010745">
    <property type="term" value="P:negative regulation of macrophage derived foam cell differentiation"/>
    <property type="evidence" value="ECO:0007669"/>
    <property type="project" value="Ensembl"/>
</dbReference>
<dbReference type="GO" id="GO:1902894">
    <property type="term" value="P:negative regulation of miRNA transcription"/>
    <property type="evidence" value="ECO:0007669"/>
    <property type="project" value="Ensembl"/>
</dbReference>
<dbReference type="GO" id="GO:0051898">
    <property type="term" value="P:negative regulation of phosphatidylinositol 3-kinase/protein kinase B signal transduction"/>
    <property type="evidence" value="ECO:0007669"/>
    <property type="project" value="Ensembl"/>
</dbReference>
<dbReference type="GO" id="GO:1903427">
    <property type="term" value="P:negative regulation of reactive oxygen species biosynthetic process"/>
    <property type="evidence" value="ECO:0007669"/>
    <property type="project" value="Ensembl"/>
</dbReference>
<dbReference type="GO" id="GO:0030512">
    <property type="term" value="P:negative regulation of transforming growth factor beta receptor signaling pathway"/>
    <property type="evidence" value="ECO:0007669"/>
    <property type="project" value="Ensembl"/>
</dbReference>
<dbReference type="GO" id="GO:0035357">
    <property type="term" value="P:peroxisome proliferator activated receptor signaling pathway"/>
    <property type="evidence" value="ECO:0000250"/>
    <property type="project" value="UniProtKB"/>
</dbReference>
<dbReference type="GO" id="GO:2001171">
    <property type="term" value="P:positive regulation of ATP biosynthetic process"/>
    <property type="evidence" value="ECO:0007669"/>
    <property type="project" value="Ensembl"/>
</dbReference>
<dbReference type="GO" id="GO:0045893">
    <property type="term" value="P:positive regulation of DNA-templated transcription"/>
    <property type="evidence" value="ECO:0000250"/>
    <property type="project" value="UniProtKB"/>
</dbReference>
<dbReference type="GO" id="GO:0046321">
    <property type="term" value="P:positive regulation of fatty acid oxidation"/>
    <property type="evidence" value="ECO:0007669"/>
    <property type="project" value="Ensembl"/>
</dbReference>
<dbReference type="GO" id="GO:0045722">
    <property type="term" value="P:positive regulation of gluconeogenesis"/>
    <property type="evidence" value="ECO:0007669"/>
    <property type="project" value="Ensembl"/>
</dbReference>
<dbReference type="GO" id="GO:0046889">
    <property type="term" value="P:positive regulation of lipid biosynthetic process"/>
    <property type="evidence" value="ECO:0007669"/>
    <property type="project" value="Ensembl"/>
</dbReference>
<dbReference type="GO" id="GO:1904189">
    <property type="term" value="P:positive regulation of transformation of host cell by virus"/>
    <property type="evidence" value="ECO:0007669"/>
    <property type="project" value="Ensembl"/>
</dbReference>
<dbReference type="GO" id="GO:0042752">
    <property type="term" value="P:regulation of circadian rhythm"/>
    <property type="evidence" value="ECO:0000250"/>
    <property type="project" value="UniProtKB"/>
</dbReference>
<dbReference type="GO" id="GO:0042060">
    <property type="term" value="P:wound healing"/>
    <property type="evidence" value="ECO:0007669"/>
    <property type="project" value="Ensembl"/>
</dbReference>
<dbReference type="CDD" id="cd06965">
    <property type="entry name" value="NR_DBD_Ppar"/>
    <property type="match status" value="1"/>
</dbReference>
<dbReference type="CDD" id="cd06932">
    <property type="entry name" value="NR_LBD_PPAR"/>
    <property type="match status" value="1"/>
</dbReference>
<dbReference type="FunFam" id="1.10.565.10:FF:000013">
    <property type="entry name" value="Peroxisome proliferator-activated receptor delta"/>
    <property type="match status" value="1"/>
</dbReference>
<dbReference type="FunFam" id="3.30.50.10:FF:000010">
    <property type="entry name" value="Peroxisome proliferator-activated receptor gamma"/>
    <property type="match status" value="1"/>
</dbReference>
<dbReference type="Gene3D" id="3.30.50.10">
    <property type="entry name" value="Erythroid Transcription Factor GATA-1, subunit A"/>
    <property type="match status" value="1"/>
</dbReference>
<dbReference type="Gene3D" id="1.10.565.10">
    <property type="entry name" value="Retinoid X Receptor"/>
    <property type="match status" value="1"/>
</dbReference>
<dbReference type="InterPro" id="IPR003074">
    <property type="entry name" value="1Cnucl_rcpt"/>
</dbReference>
<dbReference type="InterPro" id="IPR035500">
    <property type="entry name" value="NHR-like_dom_sf"/>
</dbReference>
<dbReference type="InterPro" id="IPR000536">
    <property type="entry name" value="Nucl_hrmn_rcpt_lig-bd"/>
</dbReference>
<dbReference type="InterPro" id="IPR050234">
    <property type="entry name" value="Nuclear_hormone_rcpt_NR1"/>
</dbReference>
<dbReference type="InterPro" id="IPR001723">
    <property type="entry name" value="Nuclear_hrmn_rcpt"/>
</dbReference>
<dbReference type="InterPro" id="IPR003076">
    <property type="entry name" value="PPAR-alpha"/>
</dbReference>
<dbReference type="InterPro" id="IPR001628">
    <property type="entry name" value="Znf_hrmn_rcpt"/>
</dbReference>
<dbReference type="InterPro" id="IPR013088">
    <property type="entry name" value="Znf_NHR/GATA"/>
</dbReference>
<dbReference type="PANTHER" id="PTHR24082">
    <property type="entry name" value="NUCLEAR HORMONE RECEPTOR"/>
    <property type="match status" value="1"/>
</dbReference>
<dbReference type="PANTHER" id="PTHR24082:SF197">
    <property type="entry name" value="PEROXISOME PROLIFERATOR-ACTIVATED RECEPTOR ALPHA"/>
    <property type="match status" value="1"/>
</dbReference>
<dbReference type="Pfam" id="PF00104">
    <property type="entry name" value="Hormone_recep"/>
    <property type="match status" value="1"/>
</dbReference>
<dbReference type="Pfam" id="PF00105">
    <property type="entry name" value="zf-C4"/>
    <property type="match status" value="1"/>
</dbReference>
<dbReference type="PRINTS" id="PR01288">
    <property type="entry name" value="PROXISOMEPAR"/>
</dbReference>
<dbReference type="PRINTS" id="PR01289">
    <property type="entry name" value="PROXISOMPAAR"/>
</dbReference>
<dbReference type="PRINTS" id="PR00398">
    <property type="entry name" value="STRDHORMONER"/>
</dbReference>
<dbReference type="PRINTS" id="PR00047">
    <property type="entry name" value="STROIDFINGER"/>
</dbReference>
<dbReference type="SMART" id="SM00430">
    <property type="entry name" value="HOLI"/>
    <property type="match status" value="1"/>
</dbReference>
<dbReference type="SMART" id="SM00399">
    <property type="entry name" value="ZnF_C4"/>
    <property type="match status" value="1"/>
</dbReference>
<dbReference type="SUPFAM" id="SSF57716">
    <property type="entry name" value="Glucocorticoid receptor-like (DNA-binding domain)"/>
    <property type="match status" value="1"/>
</dbReference>
<dbReference type="SUPFAM" id="SSF48508">
    <property type="entry name" value="Nuclear receptor ligand-binding domain"/>
    <property type="match status" value="1"/>
</dbReference>
<dbReference type="PROSITE" id="PS51843">
    <property type="entry name" value="NR_LBD"/>
    <property type="match status" value="1"/>
</dbReference>
<dbReference type="PROSITE" id="PS00031">
    <property type="entry name" value="NUCLEAR_REC_DBD_1"/>
    <property type="match status" value="1"/>
</dbReference>
<dbReference type="PROSITE" id="PS51030">
    <property type="entry name" value="NUCLEAR_REC_DBD_2"/>
    <property type="match status" value="1"/>
</dbReference>
<reference key="1">
    <citation type="journal article" date="1998" name="Arch. Toxicol.">
        <title>A peroxisome proliferator-activated receptor-alpha (PPARalpha) cDNA cloned from guinea-pig liver encodes a protein with similar properties to the mouse PPARalpha: implications for species differences in responses to peroxisome proliferators.</title>
        <authorList>
            <person name="Tugwood J.D."/>
            <person name="Holden P.R."/>
            <person name="James N.H."/>
            <person name="Prince R.A."/>
            <person name="Roberts R.A."/>
        </authorList>
    </citation>
    <scope>NUCLEOTIDE SEQUENCE [MRNA]</scope>
    <source>
        <strain>Dunkin-Hartley</strain>
        <tissue>Liver</tissue>
    </source>
</reference>
<gene>
    <name type="primary">PPARA</name>
    <name type="synonym">NR1C1</name>
</gene>
<evidence type="ECO:0000250" key="1"/>
<evidence type="ECO:0000250" key="2">
    <source>
        <dbReference type="UniProtKB" id="P23204"/>
    </source>
</evidence>
<evidence type="ECO:0000250" key="3">
    <source>
        <dbReference type="UniProtKB" id="P37230"/>
    </source>
</evidence>
<evidence type="ECO:0000250" key="4">
    <source>
        <dbReference type="UniProtKB" id="Q07869"/>
    </source>
</evidence>
<evidence type="ECO:0000255" key="5">
    <source>
        <dbReference type="PROSITE-ProRule" id="PRU00407"/>
    </source>
</evidence>
<evidence type="ECO:0000255" key="6">
    <source>
        <dbReference type="PROSITE-ProRule" id="PRU01189"/>
    </source>
</evidence>
<evidence type="ECO:0000305" key="7"/>